<reference key="1">
    <citation type="journal article" date="2009" name="PLoS Genet.">
        <title>Organised genome dynamics in the Escherichia coli species results in highly diverse adaptive paths.</title>
        <authorList>
            <person name="Touchon M."/>
            <person name="Hoede C."/>
            <person name="Tenaillon O."/>
            <person name="Barbe V."/>
            <person name="Baeriswyl S."/>
            <person name="Bidet P."/>
            <person name="Bingen E."/>
            <person name="Bonacorsi S."/>
            <person name="Bouchier C."/>
            <person name="Bouvet O."/>
            <person name="Calteau A."/>
            <person name="Chiapello H."/>
            <person name="Clermont O."/>
            <person name="Cruveiller S."/>
            <person name="Danchin A."/>
            <person name="Diard M."/>
            <person name="Dossat C."/>
            <person name="Karoui M.E."/>
            <person name="Frapy E."/>
            <person name="Garry L."/>
            <person name="Ghigo J.M."/>
            <person name="Gilles A.M."/>
            <person name="Johnson J."/>
            <person name="Le Bouguenec C."/>
            <person name="Lescat M."/>
            <person name="Mangenot S."/>
            <person name="Martinez-Jehanne V."/>
            <person name="Matic I."/>
            <person name="Nassif X."/>
            <person name="Oztas S."/>
            <person name="Petit M.A."/>
            <person name="Pichon C."/>
            <person name="Rouy Z."/>
            <person name="Ruf C.S."/>
            <person name="Schneider D."/>
            <person name="Tourret J."/>
            <person name="Vacherie B."/>
            <person name="Vallenet D."/>
            <person name="Medigue C."/>
            <person name="Rocha E.P.C."/>
            <person name="Denamur E."/>
        </authorList>
    </citation>
    <scope>NUCLEOTIDE SEQUENCE [LARGE SCALE GENOMIC DNA]</scope>
    <source>
        <strain>55989 / EAEC</strain>
    </source>
</reference>
<sequence>MDRIIEKLDHGWWVVSHEQKLWLPKGELPYGEAANFDLVGQRALQIGEWQGEPVWLVQQQRRHDMGSVRQVIDLDVGLFQLAGRGVQLAEFYRSHKYCGYCGHEMYPSKTEWAMLCSHCRERYYPQIAPCIIVAIRRDDSILLAQHTRHRNGVHTVLAGFVEVGETLEQAVAREVMEESGIKVKNLRYVTSQPWPFPQSLMTAFMAEYDSGDIVIDPKELLEANWYRYDDLPLLPPPGTVARRLIEDTVAMCRAEYE</sequence>
<accession>B7LA85</accession>
<evidence type="ECO:0000255" key="1">
    <source>
        <dbReference type="HAMAP-Rule" id="MF_00297"/>
    </source>
</evidence>
<feature type="chain" id="PRO_1000191832" description="NAD-capped RNA hydrolase NudC">
    <location>
        <begin position="1"/>
        <end position="257"/>
    </location>
</feature>
<feature type="domain" description="Nudix hydrolase" evidence="1">
    <location>
        <begin position="125"/>
        <end position="248"/>
    </location>
</feature>
<feature type="short sequence motif" description="Nudix box" evidence="1">
    <location>
        <begin position="159"/>
        <end position="180"/>
    </location>
</feature>
<feature type="binding site" evidence="1">
    <location>
        <position position="25"/>
    </location>
    <ligand>
        <name>substrate</name>
    </ligand>
</feature>
<feature type="binding site" evidence="1">
    <location>
        <position position="69"/>
    </location>
    <ligand>
        <name>substrate</name>
    </ligand>
</feature>
<feature type="binding site" evidence="1">
    <location>
        <position position="98"/>
    </location>
    <ligand>
        <name>Zn(2+)</name>
        <dbReference type="ChEBI" id="CHEBI:29105"/>
    </ligand>
</feature>
<feature type="binding site" evidence="1">
    <location>
        <position position="101"/>
    </location>
    <ligand>
        <name>Zn(2+)</name>
        <dbReference type="ChEBI" id="CHEBI:29105"/>
    </ligand>
</feature>
<feature type="binding site" evidence="1">
    <location>
        <position position="111"/>
    </location>
    <ligand>
        <name>substrate</name>
    </ligand>
</feature>
<feature type="binding site" evidence="1">
    <location>
        <position position="116"/>
    </location>
    <ligand>
        <name>Zn(2+)</name>
        <dbReference type="ChEBI" id="CHEBI:29105"/>
    </ligand>
</feature>
<feature type="binding site" evidence="1">
    <location>
        <position position="119"/>
    </location>
    <ligand>
        <name>Zn(2+)</name>
        <dbReference type="ChEBI" id="CHEBI:29105"/>
    </ligand>
</feature>
<feature type="binding site" evidence="1">
    <location>
        <position position="124"/>
    </location>
    <ligand>
        <name>substrate</name>
    </ligand>
</feature>
<feature type="binding site" evidence="1">
    <location>
        <position position="158"/>
    </location>
    <ligand>
        <name>a divalent metal cation</name>
        <dbReference type="ChEBI" id="CHEBI:60240"/>
        <label>1</label>
    </ligand>
</feature>
<feature type="binding site" evidence="1">
    <location>
        <position position="174"/>
    </location>
    <ligand>
        <name>a divalent metal cation</name>
        <dbReference type="ChEBI" id="CHEBI:60240"/>
        <label>2</label>
    </ligand>
</feature>
<feature type="binding site" evidence="1">
    <location>
        <position position="174"/>
    </location>
    <ligand>
        <name>a divalent metal cation</name>
        <dbReference type="ChEBI" id="CHEBI:60240"/>
        <label>3</label>
    </ligand>
</feature>
<feature type="binding site" evidence="1">
    <location>
        <position position="178"/>
    </location>
    <ligand>
        <name>a divalent metal cation</name>
        <dbReference type="ChEBI" id="CHEBI:60240"/>
        <label>1</label>
    </ligand>
</feature>
<feature type="binding site" evidence="1">
    <location>
        <position position="178"/>
    </location>
    <ligand>
        <name>a divalent metal cation</name>
        <dbReference type="ChEBI" id="CHEBI:60240"/>
        <label>3</label>
    </ligand>
</feature>
<feature type="binding site" evidence="1">
    <location>
        <begin position="192"/>
        <end position="199"/>
    </location>
    <ligand>
        <name>substrate</name>
    </ligand>
</feature>
<feature type="binding site" evidence="1">
    <location>
        <position position="219"/>
    </location>
    <ligand>
        <name>a divalent metal cation</name>
        <dbReference type="ChEBI" id="CHEBI:60240"/>
        <label>1</label>
    </ligand>
</feature>
<feature type="binding site" evidence="1">
    <location>
        <position position="219"/>
    </location>
    <ligand>
        <name>a divalent metal cation</name>
        <dbReference type="ChEBI" id="CHEBI:60240"/>
        <label>3</label>
    </ligand>
</feature>
<feature type="binding site" evidence="1">
    <location>
        <position position="241"/>
    </location>
    <ligand>
        <name>substrate</name>
    </ligand>
</feature>
<dbReference type="EC" id="3.6.1.-" evidence="1"/>
<dbReference type="EC" id="3.6.1.22" evidence="1"/>
<dbReference type="EMBL" id="CU928145">
    <property type="protein sequence ID" value="CAV01246.1"/>
    <property type="molecule type" value="Genomic_DNA"/>
</dbReference>
<dbReference type="RefSeq" id="WP_000373940.1">
    <property type="nucleotide sequence ID" value="NC_011748.1"/>
</dbReference>
<dbReference type="SMR" id="B7LA85"/>
<dbReference type="GeneID" id="93777898"/>
<dbReference type="KEGG" id="eck:EC55989_4481"/>
<dbReference type="HOGENOM" id="CLU_037162_0_1_6"/>
<dbReference type="Proteomes" id="UP000000746">
    <property type="component" value="Chromosome"/>
</dbReference>
<dbReference type="GO" id="GO:0005829">
    <property type="term" value="C:cytosol"/>
    <property type="evidence" value="ECO:0007669"/>
    <property type="project" value="TreeGrafter"/>
</dbReference>
<dbReference type="GO" id="GO:0000287">
    <property type="term" value="F:magnesium ion binding"/>
    <property type="evidence" value="ECO:0007669"/>
    <property type="project" value="UniProtKB-UniRule"/>
</dbReference>
<dbReference type="GO" id="GO:0030145">
    <property type="term" value="F:manganese ion binding"/>
    <property type="evidence" value="ECO:0007669"/>
    <property type="project" value="UniProtKB-UniRule"/>
</dbReference>
<dbReference type="GO" id="GO:0000210">
    <property type="term" value="F:NAD+ diphosphatase activity"/>
    <property type="evidence" value="ECO:0007669"/>
    <property type="project" value="UniProtKB-UniRule"/>
</dbReference>
<dbReference type="GO" id="GO:0035529">
    <property type="term" value="F:NADH pyrophosphatase activity"/>
    <property type="evidence" value="ECO:0007669"/>
    <property type="project" value="TreeGrafter"/>
</dbReference>
<dbReference type="GO" id="GO:0110153">
    <property type="term" value="F:RNA NAD-cap (NMN-forming) hydrolase activity"/>
    <property type="evidence" value="ECO:0007669"/>
    <property type="project" value="RHEA"/>
</dbReference>
<dbReference type="GO" id="GO:0008270">
    <property type="term" value="F:zinc ion binding"/>
    <property type="evidence" value="ECO:0007669"/>
    <property type="project" value="UniProtKB-UniRule"/>
</dbReference>
<dbReference type="GO" id="GO:0019677">
    <property type="term" value="P:NAD catabolic process"/>
    <property type="evidence" value="ECO:0007669"/>
    <property type="project" value="TreeGrafter"/>
</dbReference>
<dbReference type="GO" id="GO:0006734">
    <property type="term" value="P:NADH metabolic process"/>
    <property type="evidence" value="ECO:0007669"/>
    <property type="project" value="TreeGrafter"/>
</dbReference>
<dbReference type="GO" id="GO:0006742">
    <property type="term" value="P:NADP catabolic process"/>
    <property type="evidence" value="ECO:0007669"/>
    <property type="project" value="TreeGrafter"/>
</dbReference>
<dbReference type="CDD" id="cd03429">
    <property type="entry name" value="NUDIX_NADH_pyrophosphatase_Nudt13"/>
    <property type="match status" value="1"/>
</dbReference>
<dbReference type="FunFam" id="3.90.79.10:FF:000004">
    <property type="entry name" value="NADH pyrophosphatase"/>
    <property type="match status" value="1"/>
</dbReference>
<dbReference type="FunFam" id="3.90.79.20:FF:000001">
    <property type="entry name" value="NADH pyrophosphatase"/>
    <property type="match status" value="1"/>
</dbReference>
<dbReference type="Gene3D" id="3.90.79.20">
    <property type="match status" value="1"/>
</dbReference>
<dbReference type="Gene3D" id="3.90.79.10">
    <property type="entry name" value="Nucleoside Triphosphate Pyrophosphohydrolase"/>
    <property type="match status" value="1"/>
</dbReference>
<dbReference type="HAMAP" id="MF_00297">
    <property type="entry name" value="Nudix_NudC"/>
    <property type="match status" value="1"/>
</dbReference>
<dbReference type="InterPro" id="IPR050241">
    <property type="entry name" value="NAD-cap_RNA_hydrolase_NudC"/>
</dbReference>
<dbReference type="InterPro" id="IPR049734">
    <property type="entry name" value="NudC-like_C"/>
</dbReference>
<dbReference type="InterPro" id="IPR015797">
    <property type="entry name" value="NUDIX_hydrolase-like_dom_sf"/>
</dbReference>
<dbReference type="InterPro" id="IPR020084">
    <property type="entry name" value="NUDIX_hydrolase_CS"/>
</dbReference>
<dbReference type="InterPro" id="IPR000086">
    <property type="entry name" value="NUDIX_hydrolase_dom"/>
</dbReference>
<dbReference type="InterPro" id="IPR022925">
    <property type="entry name" value="RNA_Hydrolase_NudC"/>
</dbReference>
<dbReference type="InterPro" id="IPR015376">
    <property type="entry name" value="Znr_NADH_PPase"/>
</dbReference>
<dbReference type="NCBIfam" id="NF001299">
    <property type="entry name" value="PRK00241.1"/>
    <property type="match status" value="1"/>
</dbReference>
<dbReference type="PANTHER" id="PTHR42904:SF6">
    <property type="entry name" value="NAD-CAPPED RNA HYDROLASE NUDT12"/>
    <property type="match status" value="1"/>
</dbReference>
<dbReference type="PANTHER" id="PTHR42904">
    <property type="entry name" value="NUDIX HYDROLASE, NUDC SUBFAMILY"/>
    <property type="match status" value="1"/>
</dbReference>
<dbReference type="Pfam" id="PF00293">
    <property type="entry name" value="NUDIX"/>
    <property type="match status" value="1"/>
</dbReference>
<dbReference type="Pfam" id="PF09297">
    <property type="entry name" value="Zn_ribbon_NUD"/>
    <property type="match status" value="1"/>
</dbReference>
<dbReference type="SUPFAM" id="SSF55811">
    <property type="entry name" value="Nudix"/>
    <property type="match status" value="2"/>
</dbReference>
<dbReference type="PROSITE" id="PS51462">
    <property type="entry name" value="NUDIX"/>
    <property type="match status" value="1"/>
</dbReference>
<dbReference type="PROSITE" id="PS00893">
    <property type="entry name" value="NUDIX_BOX"/>
    <property type="match status" value="1"/>
</dbReference>
<organism>
    <name type="scientific">Escherichia coli (strain 55989 / EAEC)</name>
    <dbReference type="NCBI Taxonomy" id="585055"/>
    <lineage>
        <taxon>Bacteria</taxon>
        <taxon>Pseudomonadati</taxon>
        <taxon>Pseudomonadota</taxon>
        <taxon>Gammaproteobacteria</taxon>
        <taxon>Enterobacterales</taxon>
        <taxon>Enterobacteriaceae</taxon>
        <taxon>Escherichia</taxon>
    </lineage>
</organism>
<keyword id="KW-0378">Hydrolase</keyword>
<keyword id="KW-0460">Magnesium</keyword>
<keyword id="KW-0464">Manganese</keyword>
<keyword id="KW-0479">Metal-binding</keyword>
<keyword id="KW-0520">NAD</keyword>
<keyword id="KW-1185">Reference proteome</keyword>
<keyword id="KW-0862">Zinc</keyword>
<name>NUDC_ECO55</name>
<proteinExistence type="inferred from homology"/>
<comment type="function">
    <text evidence="1">mRNA decapping enzyme that specifically removes the nicotinamide adenine dinucleotide (NAD) cap from a subset of mRNAs by hydrolyzing the diphosphate linkage to produce nicotinamide mononucleotide (NMN) and 5' monophosphate mRNA. The NAD-cap is present at the 5'-end of some mRNAs and stabilizes RNA against 5'-processing. Has preference for mRNAs with a 5'-end purine. Catalyzes the hydrolysis of a broad range of dinucleotide pyrophosphates.</text>
</comment>
<comment type="catalytic activity">
    <reaction evidence="1">
        <text>a 5'-end NAD(+)-phospho-ribonucleoside in mRNA + H2O = a 5'-end phospho-adenosine-phospho-ribonucleoside in mRNA + beta-nicotinamide D-ribonucleotide + 2 H(+)</text>
        <dbReference type="Rhea" id="RHEA:60876"/>
        <dbReference type="Rhea" id="RHEA-COMP:15698"/>
        <dbReference type="Rhea" id="RHEA-COMP:15719"/>
        <dbReference type="ChEBI" id="CHEBI:14649"/>
        <dbReference type="ChEBI" id="CHEBI:15377"/>
        <dbReference type="ChEBI" id="CHEBI:15378"/>
        <dbReference type="ChEBI" id="CHEBI:144029"/>
        <dbReference type="ChEBI" id="CHEBI:144051"/>
    </reaction>
    <physiologicalReaction direction="left-to-right" evidence="1">
        <dbReference type="Rhea" id="RHEA:60877"/>
    </physiologicalReaction>
</comment>
<comment type="catalytic activity">
    <reaction evidence="1">
        <text>NAD(+) + H2O = beta-nicotinamide D-ribonucleotide + AMP + 2 H(+)</text>
        <dbReference type="Rhea" id="RHEA:11800"/>
        <dbReference type="ChEBI" id="CHEBI:14649"/>
        <dbReference type="ChEBI" id="CHEBI:15377"/>
        <dbReference type="ChEBI" id="CHEBI:15378"/>
        <dbReference type="ChEBI" id="CHEBI:57540"/>
        <dbReference type="ChEBI" id="CHEBI:456215"/>
        <dbReference type="EC" id="3.6.1.22"/>
    </reaction>
</comment>
<comment type="catalytic activity">
    <reaction evidence="1">
        <text>NADH + H2O = reduced beta-nicotinamide D-ribonucleotide + AMP + 2 H(+)</text>
        <dbReference type="Rhea" id="RHEA:48868"/>
        <dbReference type="ChEBI" id="CHEBI:15377"/>
        <dbReference type="ChEBI" id="CHEBI:15378"/>
        <dbReference type="ChEBI" id="CHEBI:57945"/>
        <dbReference type="ChEBI" id="CHEBI:90832"/>
        <dbReference type="ChEBI" id="CHEBI:456215"/>
        <dbReference type="EC" id="3.6.1.22"/>
    </reaction>
</comment>
<comment type="cofactor">
    <cofactor evidence="1">
        <name>Mg(2+)</name>
        <dbReference type="ChEBI" id="CHEBI:18420"/>
    </cofactor>
    <cofactor evidence="1">
        <name>Mn(2+)</name>
        <dbReference type="ChEBI" id="CHEBI:29035"/>
    </cofactor>
    <text evidence="1">Divalent metal cations. Mg(2+) or Mn(2+).</text>
</comment>
<comment type="cofactor">
    <cofactor evidence="1">
        <name>Zn(2+)</name>
        <dbReference type="ChEBI" id="CHEBI:29105"/>
    </cofactor>
    <text evidence="1">Binds 1 zinc ion per subunit.</text>
</comment>
<comment type="subunit">
    <text evidence="1">Homodimer.</text>
</comment>
<comment type="similarity">
    <text evidence="1">Belongs to the Nudix hydrolase family. NudC subfamily.</text>
</comment>
<gene>
    <name evidence="1" type="primary">nudC</name>
    <name type="ordered locus">EC55989_4481</name>
</gene>
<protein>
    <recommendedName>
        <fullName evidence="1">NAD-capped RNA hydrolase NudC</fullName>
        <shortName evidence="1">DeNADding enzyme NudC</shortName>
        <ecNumber evidence="1">3.6.1.-</ecNumber>
    </recommendedName>
    <alternativeName>
        <fullName evidence="1">NADH pyrophosphatase</fullName>
        <ecNumber evidence="1">3.6.1.22</ecNumber>
    </alternativeName>
</protein>